<organism>
    <name type="scientific">Pectobacterium atrosepticum (strain SCRI 1043 / ATCC BAA-672)</name>
    <name type="common">Erwinia carotovora subsp. atroseptica</name>
    <dbReference type="NCBI Taxonomy" id="218491"/>
    <lineage>
        <taxon>Bacteria</taxon>
        <taxon>Pseudomonadati</taxon>
        <taxon>Pseudomonadota</taxon>
        <taxon>Gammaproteobacteria</taxon>
        <taxon>Enterobacterales</taxon>
        <taxon>Pectobacteriaceae</taxon>
        <taxon>Pectobacterium</taxon>
    </lineage>
</organism>
<feature type="chain" id="PRO_1000084812" description="Amino-acid acetyltransferase">
    <location>
        <begin position="1"/>
        <end position="441"/>
    </location>
</feature>
<feature type="domain" description="N-acetyltransferase" evidence="1">
    <location>
        <begin position="295"/>
        <end position="434"/>
    </location>
</feature>
<evidence type="ECO:0000255" key="1">
    <source>
        <dbReference type="HAMAP-Rule" id="MF_01105"/>
    </source>
</evidence>
<comment type="catalytic activity">
    <reaction evidence="1">
        <text>L-glutamate + acetyl-CoA = N-acetyl-L-glutamate + CoA + H(+)</text>
        <dbReference type="Rhea" id="RHEA:24292"/>
        <dbReference type="ChEBI" id="CHEBI:15378"/>
        <dbReference type="ChEBI" id="CHEBI:29985"/>
        <dbReference type="ChEBI" id="CHEBI:44337"/>
        <dbReference type="ChEBI" id="CHEBI:57287"/>
        <dbReference type="ChEBI" id="CHEBI:57288"/>
        <dbReference type="EC" id="2.3.1.1"/>
    </reaction>
</comment>
<comment type="pathway">
    <text evidence="1">Amino-acid biosynthesis; L-arginine biosynthesis; N(2)-acetyl-L-ornithine from L-glutamate: step 1/4.</text>
</comment>
<comment type="subunit">
    <text evidence="1">Homohexamer.</text>
</comment>
<comment type="subcellular location">
    <subcellularLocation>
        <location evidence="1">Cytoplasm</location>
    </subcellularLocation>
</comment>
<comment type="similarity">
    <text evidence="1">Belongs to the acetyltransferase family. ArgA subfamily.</text>
</comment>
<dbReference type="EC" id="2.3.1.1" evidence="1"/>
<dbReference type="EMBL" id="BX950851">
    <property type="protein sequence ID" value="CAG73910.1"/>
    <property type="molecule type" value="Genomic_DNA"/>
</dbReference>
<dbReference type="SMR" id="Q6D8H5"/>
<dbReference type="STRING" id="218491.ECA0999"/>
<dbReference type="KEGG" id="eca:ECA0999"/>
<dbReference type="eggNOG" id="COG0548">
    <property type="taxonomic scope" value="Bacteria"/>
</dbReference>
<dbReference type="eggNOG" id="COG1246">
    <property type="taxonomic scope" value="Bacteria"/>
</dbReference>
<dbReference type="HOGENOM" id="CLU_024773_0_0_6"/>
<dbReference type="OrthoDB" id="9802238at2"/>
<dbReference type="UniPathway" id="UPA00068">
    <property type="reaction ID" value="UER00106"/>
</dbReference>
<dbReference type="Proteomes" id="UP000007966">
    <property type="component" value="Chromosome"/>
</dbReference>
<dbReference type="GO" id="GO:0005737">
    <property type="term" value="C:cytoplasm"/>
    <property type="evidence" value="ECO:0007669"/>
    <property type="project" value="UniProtKB-SubCell"/>
</dbReference>
<dbReference type="GO" id="GO:0004042">
    <property type="term" value="F:L-glutamate N-acetyltransferase activity"/>
    <property type="evidence" value="ECO:0007669"/>
    <property type="project" value="UniProtKB-UniRule"/>
</dbReference>
<dbReference type="GO" id="GO:0006526">
    <property type="term" value="P:L-arginine biosynthetic process"/>
    <property type="evidence" value="ECO:0007669"/>
    <property type="project" value="UniProtKB-UniRule"/>
</dbReference>
<dbReference type="CDD" id="cd04237">
    <property type="entry name" value="AAK_NAGS-ABP"/>
    <property type="match status" value="1"/>
</dbReference>
<dbReference type="CDD" id="cd04301">
    <property type="entry name" value="NAT_SF"/>
    <property type="match status" value="1"/>
</dbReference>
<dbReference type="FunFam" id="3.40.1160.10:FF:000005">
    <property type="entry name" value="Amino-acid acetyltransferase"/>
    <property type="match status" value="1"/>
</dbReference>
<dbReference type="FunFam" id="3.40.630.30:FF:000009">
    <property type="entry name" value="Amino-acid acetyltransferase"/>
    <property type="match status" value="1"/>
</dbReference>
<dbReference type="Gene3D" id="3.40.630.30">
    <property type="match status" value="1"/>
</dbReference>
<dbReference type="Gene3D" id="3.40.1160.10">
    <property type="entry name" value="Acetylglutamate kinase-like"/>
    <property type="match status" value="1"/>
</dbReference>
<dbReference type="HAMAP" id="MF_01105">
    <property type="entry name" value="N_acetyl_glu_synth"/>
    <property type="match status" value="1"/>
</dbReference>
<dbReference type="InterPro" id="IPR036393">
    <property type="entry name" value="AceGlu_kinase-like_sf"/>
</dbReference>
<dbReference type="InterPro" id="IPR016181">
    <property type="entry name" value="Acyl_CoA_acyltransferase"/>
</dbReference>
<dbReference type="InterPro" id="IPR001048">
    <property type="entry name" value="Asp/Glu/Uridylate_kinase"/>
</dbReference>
<dbReference type="InterPro" id="IPR000182">
    <property type="entry name" value="GNAT_dom"/>
</dbReference>
<dbReference type="InterPro" id="IPR033719">
    <property type="entry name" value="NAGS_kin"/>
</dbReference>
<dbReference type="InterPro" id="IPR010167">
    <property type="entry name" value="NH2A_AcTrfase"/>
</dbReference>
<dbReference type="NCBIfam" id="TIGR01890">
    <property type="entry name" value="N-Ac-Glu-synth"/>
    <property type="match status" value="1"/>
</dbReference>
<dbReference type="NCBIfam" id="NF003641">
    <property type="entry name" value="PRK05279.1"/>
    <property type="match status" value="1"/>
</dbReference>
<dbReference type="PANTHER" id="PTHR30602">
    <property type="entry name" value="AMINO-ACID ACETYLTRANSFERASE"/>
    <property type="match status" value="1"/>
</dbReference>
<dbReference type="PANTHER" id="PTHR30602:SF12">
    <property type="entry name" value="AMINO-ACID ACETYLTRANSFERASE NAGS1, CHLOROPLASTIC-RELATED"/>
    <property type="match status" value="1"/>
</dbReference>
<dbReference type="Pfam" id="PF00696">
    <property type="entry name" value="AA_kinase"/>
    <property type="match status" value="1"/>
</dbReference>
<dbReference type="Pfam" id="PF00583">
    <property type="entry name" value="Acetyltransf_1"/>
    <property type="match status" value="1"/>
</dbReference>
<dbReference type="PIRSF" id="PIRSF000423">
    <property type="entry name" value="ArgA"/>
    <property type="match status" value="1"/>
</dbReference>
<dbReference type="SUPFAM" id="SSF55729">
    <property type="entry name" value="Acyl-CoA N-acyltransferases (Nat)"/>
    <property type="match status" value="1"/>
</dbReference>
<dbReference type="SUPFAM" id="SSF53633">
    <property type="entry name" value="Carbamate kinase-like"/>
    <property type="match status" value="1"/>
</dbReference>
<dbReference type="PROSITE" id="PS51186">
    <property type="entry name" value="GNAT"/>
    <property type="match status" value="1"/>
</dbReference>
<name>ARGA_PECAS</name>
<keyword id="KW-0012">Acyltransferase</keyword>
<keyword id="KW-0028">Amino-acid biosynthesis</keyword>
<keyword id="KW-0055">Arginine biosynthesis</keyword>
<keyword id="KW-0963">Cytoplasm</keyword>
<keyword id="KW-1185">Reference proteome</keyword>
<keyword id="KW-0808">Transferase</keyword>
<sequence length="441" mass="49073">MKERSTELVQGFRHSVPYINAHRGKTFVIMLGGEAIEHANFSSIVNDIGLLHSLGIKLVVVYGARPQIDANLTTHHYEPHYHKNTRITDSATLELVKQAAGMLQLDITARLSMSLNNTPLQGAHINVVSGNFIIAQPLGVDDGVDYCHSGRIRRIDEEAVHRQLNSGAIVLLGPVAVSVTGESFNLTSEEVATQLAIKLKAEKMIGFCSSQGVTNEEGRIISELFPDDAQQRIDVLEQAGDYHSGTVRFLRGAVKACRSGVRRSHLISYQDDGALLQELFSRDGIGTQIVMESAEQVRRATINDIGGILELIRPLEEQGILVRRSREQLEMEIDKFTVVVRDNLTIACAALYPFPEESIGEMACVAVHPDYRSSSRGDMLLMRVAAQARQQGLQKLFVLTTHSIHWFQERGFLPAEVEMLPKKKQALYNYQRRSKILVLDL</sequence>
<accession>Q6D8H5</accession>
<protein>
    <recommendedName>
        <fullName evidence="1">Amino-acid acetyltransferase</fullName>
        <ecNumber evidence="1">2.3.1.1</ecNumber>
    </recommendedName>
    <alternativeName>
        <fullName evidence="1">N-acetylglutamate synthase</fullName>
        <shortName evidence="1">AGS</shortName>
        <shortName evidence="1">NAGS</shortName>
    </alternativeName>
</protein>
<gene>
    <name evidence="1" type="primary">argA</name>
    <name type="ordered locus">ECA0999</name>
</gene>
<reference key="1">
    <citation type="journal article" date="2004" name="Proc. Natl. Acad. Sci. U.S.A.">
        <title>Genome sequence of the enterobacterial phytopathogen Erwinia carotovora subsp. atroseptica and characterization of virulence factors.</title>
        <authorList>
            <person name="Bell K.S."/>
            <person name="Sebaihia M."/>
            <person name="Pritchard L."/>
            <person name="Holden M.T.G."/>
            <person name="Hyman L.J."/>
            <person name="Holeva M.C."/>
            <person name="Thomson N.R."/>
            <person name="Bentley S.D."/>
            <person name="Churcher L.J.C."/>
            <person name="Mungall K."/>
            <person name="Atkin R."/>
            <person name="Bason N."/>
            <person name="Brooks K."/>
            <person name="Chillingworth T."/>
            <person name="Clark K."/>
            <person name="Doggett J."/>
            <person name="Fraser A."/>
            <person name="Hance Z."/>
            <person name="Hauser H."/>
            <person name="Jagels K."/>
            <person name="Moule S."/>
            <person name="Norbertczak H."/>
            <person name="Ormond D."/>
            <person name="Price C."/>
            <person name="Quail M.A."/>
            <person name="Sanders M."/>
            <person name="Walker D."/>
            <person name="Whitehead S."/>
            <person name="Salmond G.P.C."/>
            <person name="Birch P.R.J."/>
            <person name="Parkhill J."/>
            <person name="Toth I.K."/>
        </authorList>
    </citation>
    <scope>NUCLEOTIDE SEQUENCE [LARGE SCALE GENOMIC DNA]</scope>
    <source>
        <strain>SCRI 1043 / ATCC BAA-672</strain>
    </source>
</reference>
<proteinExistence type="inferred from homology"/>